<name>MATP_ECODH</name>
<organism>
    <name type="scientific">Escherichia coli (strain K12 / DH10B)</name>
    <dbReference type="NCBI Taxonomy" id="316385"/>
    <lineage>
        <taxon>Bacteria</taxon>
        <taxon>Pseudomonadati</taxon>
        <taxon>Pseudomonadota</taxon>
        <taxon>Gammaproteobacteria</taxon>
        <taxon>Enterobacterales</taxon>
        <taxon>Enterobacteriaceae</taxon>
        <taxon>Escherichia</taxon>
    </lineage>
</organism>
<gene>
    <name evidence="1" type="primary">matP</name>
    <name type="ordered locus">ECDH10B_1026</name>
</gene>
<feature type="chain" id="PRO_1000136666" description="Macrodomain Ter protein">
    <location>
        <begin position="1"/>
        <end position="150"/>
    </location>
</feature>
<proteinExistence type="inferred from homology"/>
<reference key="1">
    <citation type="journal article" date="2008" name="J. Bacteriol.">
        <title>The complete genome sequence of Escherichia coli DH10B: insights into the biology of a laboratory workhorse.</title>
        <authorList>
            <person name="Durfee T."/>
            <person name="Nelson R."/>
            <person name="Baldwin S."/>
            <person name="Plunkett G. III"/>
            <person name="Burland V."/>
            <person name="Mau B."/>
            <person name="Petrosino J.F."/>
            <person name="Qin X."/>
            <person name="Muzny D.M."/>
            <person name="Ayele M."/>
            <person name="Gibbs R.A."/>
            <person name="Csorgo B."/>
            <person name="Posfai G."/>
            <person name="Weinstock G.M."/>
            <person name="Blattner F.R."/>
        </authorList>
    </citation>
    <scope>NUCLEOTIDE SEQUENCE [LARGE SCALE GENOMIC DNA]</scope>
    <source>
        <strain>K12 / DH10B</strain>
    </source>
</reference>
<accession>B1X8R0</accession>
<protein>
    <recommendedName>
        <fullName evidence="1">Macrodomain Ter protein</fullName>
    </recommendedName>
</protein>
<dbReference type="EMBL" id="CP000948">
    <property type="protein sequence ID" value="ACB02156.1"/>
    <property type="molecule type" value="Genomic_DNA"/>
</dbReference>
<dbReference type="RefSeq" id="WP_000877161.1">
    <property type="nucleotide sequence ID" value="NC_010473.1"/>
</dbReference>
<dbReference type="SMR" id="B1X8R0"/>
<dbReference type="GeneID" id="93776458"/>
<dbReference type="KEGG" id="ecd:ECDH10B_1026"/>
<dbReference type="HOGENOM" id="CLU_142157_0_0_6"/>
<dbReference type="GO" id="GO:0005737">
    <property type="term" value="C:cytoplasm"/>
    <property type="evidence" value="ECO:0007669"/>
    <property type="project" value="UniProtKB-SubCell"/>
</dbReference>
<dbReference type="GO" id="GO:0043565">
    <property type="term" value="F:sequence-specific DNA binding"/>
    <property type="evidence" value="ECO:0007669"/>
    <property type="project" value="UniProtKB-UniRule"/>
</dbReference>
<dbReference type="GO" id="GO:0051301">
    <property type="term" value="P:cell division"/>
    <property type="evidence" value="ECO:0007669"/>
    <property type="project" value="UniProtKB-UniRule"/>
</dbReference>
<dbReference type="GO" id="GO:0006355">
    <property type="term" value="P:regulation of DNA-templated transcription"/>
    <property type="evidence" value="ECO:0007669"/>
    <property type="project" value="InterPro"/>
</dbReference>
<dbReference type="FunFam" id="1.10.1220.10:FF:000004">
    <property type="entry name" value="Macrodomain Ter protein"/>
    <property type="match status" value="1"/>
</dbReference>
<dbReference type="FunFam" id="1.20.1270.380:FF:000001">
    <property type="entry name" value="Macrodomain Ter protein"/>
    <property type="match status" value="1"/>
</dbReference>
<dbReference type="Gene3D" id="1.20.1270.380">
    <property type="entry name" value="MatP, N-terminal domain"/>
    <property type="match status" value="1"/>
</dbReference>
<dbReference type="Gene3D" id="1.10.1220.10">
    <property type="entry name" value="Met repressor-like"/>
    <property type="match status" value="1"/>
</dbReference>
<dbReference type="HAMAP" id="MF_01073">
    <property type="entry name" value="MatP"/>
    <property type="match status" value="1"/>
</dbReference>
<dbReference type="InterPro" id="IPR013321">
    <property type="entry name" value="Arc_rbn_hlx_hlx"/>
</dbReference>
<dbReference type="InterPro" id="IPR009390">
    <property type="entry name" value="MatP"/>
</dbReference>
<dbReference type="InterPro" id="IPR035375">
    <property type="entry name" value="MatP_C"/>
</dbReference>
<dbReference type="InterPro" id="IPR035087">
    <property type="entry name" value="MatP_N"/>
</dbReference>
<dbReference type="InterPro" id="IPR038339">
    <property type="entry name" value="MatP_N_sf"/>
</dbReference>
<dbReference type="NCBIfam" id="NF003471">
    <property type="entry name" value="PRK05097.1"/>
    <property type="match status" value="1"/>
</dbReference>
<dbReference type="Pfam" id="PF06303">
    <property type="entry name" value="MatP"/>
    <property type="match status" value="1"/>
</dbReference>
<dbReference type="Pfam" id="PF17414">
    <property type="entry name" value="MatP_C"/>
    <property type="match status" value="1"/>
</dbReference>
<evidence type="ECO:0000255" key="1">
    <source>
        <dbReference type="HAMAP-Rule" id="MF_01073"/>
    </source>
</evidence>
<sequence>MKYQQLENLESGWKWKYLVKKHREGELITRYIEASAAQEAVDVLLSLENEPVLVNGWIDKHMNPELVNRMKQTIRARRKRHFNAEHQHTRKKSIDLEFIVWQRLAGLAQRRGKTLSETIVQLIEDAENKEKYANKMSSLKQDLQALLGKE</sequence>
<comment type="function">
    <text evidence="1">Required for spatial organization of the terminus region of the chromosome (Ter macrodomain) during the cell cycle. Prevents early segregation of duplicated Ter macrodomains during cell division. Binds specifically to matS, which is a 13 bp signature motif repeated within the Ter macrodomain.</text>
</comment>
<comment type="subunit">
    <text evidence="1">Homodimer.</text>
</comment>
<comment type="subcellular location">
    <subcellularLocation>
        <location evidence="1">Cytoplasm</location>
    </subcellularLocation>
</comment>
<comment type="similarity">
    <text evidence="1">Belongs to the MatP family.</text>
</comment>
<keyword id="KW-0131">Cell cycle</keyword>
<keyword id="KW-0132">Cell division</keyword>
<keyword id="KW-0963">Cytoplasm</keyword>
<keyword id="KW-0238">DNA-binding</keyword>